<evidence type="ECO:0000255" key="1">
    <source>
        <dbReference type="HAMAP-Rule" id="MF_00508"/>
    </source>
</evidence>
<evidence type="ECO:0000305" key="2"/>
<keyword id="KW-0687">Ribonucleoprotein</keyword>
<keyword id="KW-0689">Ribosomal protein</keyword>
<feature type="chain" id="PRO_0000237037" description="Small ribosomal subunit protein uS10">
    <location>
        <begin position="1"/>
        <end position="102"/>
    </location>
</feature>
<protein>
    <recommendedName>
        <fullName evidence="1">Small ribosomal subunit protein uS10</fullName>
    </recommendedName>
    <alternativeName>
        <fullName evidence="2">30S ribosomal protein S10</fullName>
    </alternativeName>
</protein>
<proteinExistence type="inferred from homology"/>
<gene>
    <name evidence="1" type="primary">rpsJ</name>
    <name type="ordered locus">cbdbA438</name>
</gene>
<comment type="function">
    <text evidence="1">Involved in the binding of tRNA to the ribosomes.</text>
</comment>
<comment type="subunit">
    <text evidence="1">Part of the 30S ribosomal subunit.</text>
</comment>
<comment type="similarity">
    <text evidence="1">Belongs to the universal ribosomal protein uS10 family.</text>
</comment>
<organism>
    <name type="scientific">Dehalococcoides mccartyi (strain CBDB1)</name>
    <dbReference type="NCBI Taxonomy" id="255470"/>
    <lineage>
        <taxon>Bacteria</taxon>
        <taxon>Bacillati</taxon>
        <taxon>Chloroflexota</taxon>
        <taxon>Dehalococcoidia</taxon>
        <taxon>Dehalococcoidales</taxon>
        <taxon>Dehalococcoidaceae</taxon>
        <taxon>Dehalococcoides</taxon>
    </lineage>
</organism>
<name>RS10_DEHMC</name>
<accession>Q3ZZM5</accession>
<sequence length="102" mass="11467">MAKQKIRIKLKGFDHKILDQSALQIVEALERTGATISGPVPLPTRIQRYSVIRASFIDKDSQEQFEIRTHKRLIDIVETTSKTIDALTNLNLPAGVSIDIKL</sequence>
<reference key="1">
    <citation type="journal article" date="2005" name="Nat. Biotechnol.">
        <title>Genome sequence of the chlorinated compound-respiring bacterium Dehalococcoides species strain CBDB1.</title>
        <authorList>
            <person name="Kube M."/>
            <person name="Beck A."/>
            <person name="Zinder S.H."/>
            <person name="Kuhl H."/>
            <person name="Reinhardt R."/>
            <person name="Adrian L."/>
        </authorList>
    </citation>
    <scope>NUCLEOTIDE SEQUENCE [LARGE SCALE GENOMIC DNA]</scope>
    <source>
        <strain>CBDB1</strain>
    </source>
</reference>
<dbReference type="EMBL" id="AJ965256">
    <property type="protein sequence ID" value="CAI82638.1"/>
    <property type="molecule type" value="Genomic_DNA"/>
</dbReference>
<dbReference type="RefSeq" id="WP_011308995.1">
    <property type="nucleotide sequence ID" value="NC_007356.1"/>
</dbReference>
<dbReference type="SMR" id="Q3ZZM5"/>
<dbReference type="KEGG" id="deh:cbdbA438"/>
<dbReference type="HOGENOM" id="CLU_122625_1_3_0"/>
<dbReference type="Proteomes" id="UP000000433">
    <property type="component" value="Chromosome"/>
</dbReference>
<dbReference type="GO" id="GO:1990904">
    <property type="term" value="C:ribonucleoprotein complex"/>
    <property type="evidence" value="ECO:0007669"/>
    <property type="project" value="UniProtKB-KW"/>
</dbReference>
<dbReference type="GO" id="GO:0005840">
    <property type="term" value="C:ribosome"/>
    <property type="evidence" value="ECO:0007669"/>
    <property type="project" value="UniProtKB-KW"/>
</dbReference>
<dbReference type="GO" id="GO:0003735">
    <property type="term" value="F:structural constituent of ribosome"/>
    <property type="evidence" value="ECO:0007669"/>
    <property type="project" value="InterPro"/>
</dbReference>
<dbReference type="GO" id="GO:0000049">
    <property type="term" value="F:tRNA binding"/>
    <property type="evidence" value="ECO:0007669"/>
    <property type="project" value="UniProtKB-UniRule"/>
</dbReference>
<dbReference type="GO" id="GO:0006412">
    <property type="term" value="P:translation"/>
    <property type="evidence" value="ECO:0007669"/>
    <property type="project" value="UniProtKB-UniRule"/>
</dbReference>
<dbReference type="FunFam" id="3.30.70.600:FF:000003">
    <property type="entry name" value="30S ribosomal protein S10"/>
    <property type="match status" value="1"/>
</dbReference>
<dbReference type="Gene3D" id="3.30.70.600">
    <property type="entry name" value="Ribosomal protein S10 domain"/>
    <property type="match status" value="1"/>
</dbReference>
<dbReference type="HAMAP" id="MF_00508">
    <property type="entry name" value="Ribosomal_uS10"/>
    <property type="match status" value="1"/>
</dbReference>
<dbReference type="InterPro" id="IPR001848">
    <property type="entry name" value="Ribosomal_uS10"/>
</dbReference>
<dbReference type="InterPro" id="IPR027486">
    <property type="entry name" value="Ribosomal_uS10_dom"/>
</dbReference>
<dbReference type="InterPro" id="IPR036838">
    <property type="entry name" value="Ribosomal_uS10_dom_sf"/>
</dbReference>
<dbReference type="NCBIfam" id="NF001861">
    <property type="entry name" value="PRK00596.1"/>
    <property type="match status" value="1"/>
</dbReference>
<dbReference type="NCBIfam" id="TIGR01049">
    <property type="entry name" value="rpsJ_bact"/>
    <property type="match status" value="1"/>
</dbReference>
<dbReference type="PANTHER" id="PTHR11700">
    <property type="entry name" value="30S RIBOSOMAL PROTEIN S10 FAMILY MEMBER"/>
    <property type="match status" value="1"/>
</dbReference>
<dbReference type="Pfam" id="PF00338">
    <property type="entry name" value="Ribosomal_S10"/>
    <property type="match status" value="1"/>
</dbReference>
<dbReference type="PRINTS" id="PR00971">
    <property type="entry name" value="RIBOSOMALS10"/>
</dbReference>
<dbReference type="SMART" id="SM01403">
    <property type="entry name" value="Ribosomal_S10"/>
    <property type="match status" value="1"/>
</dbReference>
<dbReference type="SUPFAM" id="SSF54999">
    <property type="entry name" value="Ribosomal protein S10"/>
    <property type="match status" value="1"/>
</dbReference>